<organism>
    <name type="scientific">Geobacillus stearothermophilus</name>
    <name type="common">Bacillus stearothermophilus</name>
    <dbReference type="NCBI Taxonomy" id="1422"/>
    <lineage>
        <taxon>Bacteria</taxon>
        <taxon>Bacillati</taxon>
        <taxon>Bacillota</taxon>
        <taxon>Bacilli</taxon>
        <taxon>Bacillales</taxon>
        <taxon>Anoxybacillaceae</taxon>
        <taxon>Geobacillus</taxon>
    </lineage>
</organism>
<sequence>MGVKTFQFPFAEQLEKVAEQFPTFQILNEEGEVVNEEAMPELSDEQLKELMRRMVYTRILDQRSISLNRQGRLGFYAPTAGQEASQIASHFALEKEDFILPGYRDVPQIIWHGLPLYQAFLFSRGHFHGNQIPEGVNVLPPQIIIGAQYIQAAGVALGLKMRGKKAVAITYTGDGGTSQGDFYEGINFAGAFKAPAIFVVQNNRFAISTPVEKQTVAKTLAQKAVAAGIPGIQVDGMDPLAVYAAVKAARERAINGEGPTLIETLCFRYGPHTMSGDDPTRYRSKELENEWAKKDPLVRFRKFLEAKGLWSEEEENNVIEQAKEEIKEAIKKADETPKQKVTDLISIMFEELPFNLKEQYEIYKEKESK</sequence>
<reference key="1">
    <citation type="journal article" date="1990" name="Eur. J. Biochem.">
        <title>Cloning and sequence analysis of the genes encoding the alpha and beta subunits of the E1 component of the pyruvate dehydrogenase multienzyme complex of Bacillus stearothermophilus.</title>
        <authorList>
            <person name="Hawkins C.F."/>
            <person name="Borges A."/>
            <person name="Perham R.N."/>
        </authorList>
    </citation>
    <scope>NUCLEOTIDE SEQUENCE [GENOMIC DNA]</scope>
    <scope>PROTEIN SEQUENCE OF 2-35; 54-111 AND 269-331</scope>
    <source>
        <strain>ATCC 29609 / DSM 2027 / NCA 1503 / NCIMB 8924</strain>
    </source>
</reference>
<name>ODPA_GEOSE</name>
<comment type="function">
    <text>The pyruvate dehydrogenase complex catalyzes the overall conversion of pyruvate to acetyl-CoA and CO(2). It contains multiple copies of three enzymatic components: pyruvate dehydrogenase (E1), dihydrolipoamide acetyltransferase (E2) and lipoamide dehydrogenase (E3).</text>
</comment>
<comment type="catalytic activity">
    <reaction>
        <text>N(6)-[(R)-lipoyl]-L-lysyl-[protein] + pyruvate + H(+) = N(6)-[(R)-S(8)-acetyldihydrolipoyl]-L-lysyl-[protein] + CO2</text>
        <dbReference type="Rhea" id="RHEA:19189"/>
        <dbReference type="Rhea" id="RHEA-COMP:10474"/>
        <dbReference type="Rhea" id="RHEA-COMP:10478"/>
        <dbReference type="ChEBI" id="CHEBI:15361"/>
        <dbReference type="ChEBI" id="CHEBI:15378"/>
        <dbReference type="ChEBI" id="CHEBI:16526"/>
        <dbReference type="ChEBI" id="CHEBI:83099"/>
        <dbReference type="ChEBI" id="CHEBI:83111"/>
        <dbReference type="EC" id="1.2.4.1"/>
    </reaction>
</comment>
<comment type="cofactor">
    <cofactor>
        <name>thiamine diphosphate</name>
        <dbReference type="ChEBI" id="CHEBI:58937"/>
    </cofactor>
</comment>
<comment type="subunit">
    <text>Heterodimer of an alpha and a beta chain.</text>
</comment>
<comment type="interaction">
    <interactant intactId="EBI-1040686">
        <id>P21873</id>
    </interactant>
    <interactant intactId="EBI-1040700">
        <id>P21874</id>
        <label>pdhB</label>
    </interactant>
    <organismsDiffer>false</organismsDiffer>
    <experiments>3</experiments>
</comment>
<accession>P21873</accession>
<dbReference type="EC" id="1.2.4.1"/>
<dbReference type="EMBL" id="X53560">
    <property type="protein sequence ID" value="CAA37628.1"/>
    <property type="molecule type" value="Genomic_DNA"/>
</dbReference>
<dbReference type="PIR" id="S10798">
    <property type="entry name" value="DEBSPF"/>
</dbReference>
<dbReference type="RefSeq" id="WP_033016215.1">
    <property type="nucleotide sequence ID" value="NZ_RCTK01000001.1"/>
</dbReference>
<dbReference type="PDB" id="1W85">
    <property type="method" value="X-ray"/>
    <property type="resolution" value="2.00 A"/>
    <property type="chains" value="A/C/E/G=2-369"/>
</dbReference>
<dbReference type="PDB" id="1W88">
    <property type="method" value="X-ray"/>
    <property type="resolution" value="2.30 A"/>
    <property type="chains" value="A/C/E/G=2-369"/>
</dbReference>
<dbReference type="PDB" id="3DUF">
    <property type="method" value="X-ray"/>
    <property type="resolution" value="2.50 A"/>
    <property type="chains" value="A/C/E/G=1-369"/>
</dbReference>
<dbReference type="PDB" id="3DV0">
    <property type="method" value="X-ray"/>
    <property type="resolution" value="2.50 A"/>
    <property type="chains" value="A/C/E/G=1-369"/>
</dbReference>
<dbReference type="PDB" id="3DVA">
    <property type="method" value="X-ray"/>
    <property type="resolution" value="2.35 A"/>
    <property type="chains" value="A/C/E/G=1-369"/>
</dbReference>
<dbReference type="PDBsum" id="1W85"/>
<dbReference type="PDBsum" id="1W88"/>
<dbReference type="PDBsum" id="3DUF"/>
<dbReference type="PDBsum" id="3DV0"/>
<dbReference type="PDBsum" id="3DVA"/>
<dbReference type="SMR" id="P21873"/>
<dbReference type="DIP" id="DIP-29596N"/>
<dbReference type="IntAct" id="P21873">
    <property type="interactions" value="2"/>
</dbReference>
<dbReference type="GeneID" id="89611725"/>
<dbReference type="OrthoDB" id="9766715at2"/>
<dbReference type="SABIO-RK" id="P21873"/>
<dbReference type="EvolutionaryTrace" id="P21873"/>
<dbReference type="GO" id="GO:0004739">
    <property type="term" value="F:pyruvate dehydrogenase (acetyl-transferring) activity"/>
    <property type="evidence" value="ECO:0007669"/>
    <property type="project" value="UniProtKB-EC"/>
</dbReference>
<dbReference type="GO" id="GO:0009083">
    <property type="term" value="P:branched-chain amino acid catabolic process"/>
    <property type="evidence" value="ECO:0007669"/>
    <property type="project" value="TreeGrafter"/>
</dbReference>
<dbReference type="CDD" id="cd02000">
    <property type="entry name" value="TPP_E1_PDC_ADC_BCADC"/>
    <property type="match status" value="1"/>
</dbReference>
<dbReference type="FunFam" id="3.40.50.970:FF:000023">
    <property type="entry name" value="Pyruvate dehydrogenase E1 component subunit alpha"/>
    <property type="match status" value="1"/>
</dbReference>
<dbReference type="Gene3D" id="3.40.50.970">
    <property type="match status" value="1"/>
</dbReference>
<dbReference type="InterPro" id="IPR050771">
    <property type="entry name" value="Alpha-ketoacid_DH_E1_comp"/>
</dbReference>
<dbReference type="InterPro" id="IPR001017">
    <property type="entry name" value="DH_E1"/>
</dbReference>
<dbReference type="InterPro" id="IPR017596">
    <property type="entry name" value="PdhA/BkdA"/>
</dbReference>
<dbReference type="InterPro" id="IPR029061">
    <property type="entry name" value="THDP-binding"/>
</dbReference>
<dbReference type="NCBIfam" id="TIGR03181">
    <property type="entry name" value="PDH_E1_alph_x"/>
    <property type="match status" value="1"/>
</dbReference>
<dbReference type="PANTHER" id="PTHR43380">
    <property type="entry name" value="2-OXOISOVALERATE DEHYDROGENASE SUBUNIT ALPHA, MITOCHONDRIAL"/>
    <property type="match status" value="1"/>
</dbReference>
<dbReference type="PANTHER" id="PTHR43380:SF1">
    <property type="entry name" value="2-OXOISOVALERATE DEHYDROGENASE SUBUNIT ALPHA, MITOCHONDRIAL"/>
    <property type="match status" value="1"/>
</dbReference>
<dbReference type="Pfam" id="PF00676">
    <property type="entry name" value="E1_dh"/>
    <property type="match status" value="1"/>
</dbReference>
<dbReference type="SUPFAM" id="SSF52518">
    <property type="entry name" value="Thiamin diphosphate-binding fold (THDP-binding)"/>
    <property type="match status" value="1"/>
</dbReference>
<keyword id="KW-0002">3D-structure</keyword>
<keyword id="KW-0903">Direct protein sequencing</keyword>
<keyword id="KW-0560">Oxidoreductase</keyword>
<keyword id="KW-0670">Pyruvate</keyword>
<keyword id="KW-0786">Thiamine pyrophosphate</keyword>
<feature type="initiator methionine" description="Removed" evidence="1">
    <location>
        <position position="1"/>
    </location>
</feature>
<feature type="chain" id="PRO_0000162198" description="Pyruvate dehydrogenase E1 component subunit alpha">
    <location>
        <begin position="2"/>
        <end position="369"/>
    </location>
</feature>
<feature type="helix" evidence="2">
    <location>
        <begin position="10"/>
        <end position="19"/>
    </location>
</feature>
<feature type="helix" evidence="2">
    <location>
        <begin position="36"/>
        <end position="38"/>
    </location>
</feature>
<feature type="helix" evidence="2">
    <location>
        <begin position="44"/>
        <end position="69"/>
    </location>
</feature>
<feature type="helix" evidence="2">
    <location>
        <begin position="83"/>
        <end position="91"/>
    </location>
</feature>
<feature type="strand" evidence="2">
    <location>
        <begin position="98"/>
        <end position="100"/>
    </location>
</feature>
<feature type="strand" evidence="4">
    <location>
        <begin position="102"/>
        <end position="104"/>
    </location>
</feature>
<feature type="helix" evidence="2">
    <location>
        <begin position="106"/>
        <end position="111"/>
    </location>
</feature>
<feature type="helix" evidence="2">
    <location>
        <begin position="116"/>
        <end position="124"/>
    </location>
</feature>
<feature type="helix" evidence="2">
    <location>
        <begin position="127"/>
        <end position="130"/>
    </location>
</feature>
<feature type="helix" evidence="2">
    <location>
        <begin position="147"/>
        <end position="161"/>
    </location>
</feature>
<feature type="strand" evidence="2">
    <location>
        <begin position="168"/>
        <end position="173"/>
    </location>
</feature>
<feature type="helix" evidence="2">
    <location>
        <begin position="175"/>
        <end position="178"/>
    </location>
</feature>
<feature type="helix" evidence="2">
    <location>
        <begin position="180"/>
        <end position="191"/>
    </location>
</feature>
<feature type="strand" evidence="2">
    <location>
        <begin position="196"/>
        <end position="202"/>
    </location>
</feature>
<feature type="strand" evidence="2">
    <location>
        <begin position="204"/>
        <end position="206"/>
    </location>
</feature>
<feature type="helix" evidence="2">
    <location>
        <begin position="211"/>
        <end position="213"/>
    </location>
</feature>
<feature type="helix" evidence="2">
    <location>
        <begin position="221"/>
        <end position="226"/>
    </location>
</feature>
<feature type="strand" evidence="2">
    <location>
        <begin position="231"/>
        <end position="235"/>
    </location>
</feature>
<feature type="helix" evidence="2">
    <location>
        <begin position="239"/>
        <end position="254"/>
    </location>
</feature>
<feature type="strand" evidence="2">
    <location>
        <begin position="260"/>
        <end position="265"/>
    </location>
</feature>
<feature type="strand" evidence="3">
    <location>
        <begin position="274"/>
        <end position="277"/>
    </location>
</feature>
<feature type="helix" evidence="2">
    <location>
        <begin position="279"/>
        <end position="281"/>
    </location>
</feature>
<feature type="helix" evidence="2">
    <location>
        <begin position="285"/>
        <end position="292"/>
    </location>
</feature>
<feature type="helix" evidence="2">
    <location>
        <begin position="296"/>
        <end position="306"/>
    </location>
</feature>
<feature type="helix" evidence="2">
    <location>
        <begin position="312"/>
        <end position="334"/>
    </location>
</feature>
<feature type="helix" evidence="2">
    <location>
        <begin position="341"/>
        <end position="346"/>
    </location>
</feature>
<feature type="helix" evidence="2">
    <location>
        <begin position="354"/>
        <end position="366"/>
    </location>
</feature>
<gene>
    <name type="primary">pdhA</name>
</gene>
<proteinExistence type="evidence at protein level"/>
<protein>
    <recommendedName>
        <fullName>Pyruvate dehydrogenase E1 component subunit alpha</fullName>
        <ecNumber>1.2.4.1</ecNumber>
    </recommendedName>
</protein>
<evidence type="ECO:0000269" key="1">
    <source>
    </source>
</evidence>
<evidence type="ECO:0007829" key="2">
    <source>
        <dbReference type="PDB" id="1W85"/>
    </source>
</evidence>
<evidence type="ECO:0007829" key="3">
    <source>
        <dbReference type="PDB" id="3DUF"/>
    </source>
</evidence>
<evidence type="ECO:0007829" key="4">
    <source>
        <dbReference type="PDB" id="3DV0"/>
    </source>
</evidence>